<dbReference type="EMBL" id="BX571966">
    <property type="protein sequence ID" value="CAH38501.1"/>
    <property type="molecule type" value="Genomic_DNA"/>
</dbReference>
<dbReference type="RefSeq" id="WP_004197868.1">
    <property type="nucleotide sequence ID" value="NZ_CP009537.1"/>
</dbReference>
<dbReference type="RefSeq" id="YP_111046.1">
    <property type="nucleotide sequence ID" value="NC_006351.1"/>
</dbReference>
<dbReference type="SMR" id="P0DMK7"/>
<dbReference type="STRING" id="272560.BPSS1040"/>
<dbReference type="GeneID" id="93063218"/>
<dbReference type="KEGG" id="bps:BPSS1040"/>
<dbReference type="PATRIC" id="fig|272560.51.peg.4228"/>
<dbReference type="eggNOG" id="COG0745">
    <property type="taxonomic scope" value="Bacteria"/>
</dbReference>
<dbReference type="Proteomes" id="UP000000605">
    <property type="component" value="Chromosome 2"/>
</dbReference>
<dbReference type="GO" id="GO:0005829">
    <property type="term" value="C:cytosol"/>
    <property type="evidence" value="ECO:0007669"/>
    <property type="project" value="TreeGrafter"/>
</dbReference>
<dbReference type="GO" id="GO:0032993">
    <property type="term" value="C:protein-DNA complex"/>
    <property type="evidence" value="ECO:0007669"/>
    <property type="project" value="TreeGrafter"/>
</dbReference>
<dbReference type="GO" id="GO:0000156">
    <property type="term" value="F:phosphorelay response regulator activity"/>
    <property type="evidence" value="ECO:0007669"/>
    <property type="project" value="TreeGrafter"/>
</dbReference>
<dbReference type="GO" id="GO:0000976">
    <property type="term" value="F:transcription cis-regulatory region binding"/>
    <property type="evidence" value="ECO:0007669"/>
    <property type="project" value="TreeGrafter"/>
</dbReference>
<dbReference type="GO" id="GO:0006355">
    <property type="term" value="P:regulation of DNA-templated transcription"/>
    <property type="evidence" value="ECO:0007669"/>
    <property type="project" value="InterPro"/>
</dbReference>
<dbReference type="CDD" id="cd19935">
    <property type="entry name" value="REC_OmpR_CusR-like"/>
    <property type="match status" value="1"/>
</dbReference>
<dbReference type="CDD" id="cd00383">
    <property type="entry name" value="trans_reg_C"/>
    <property type="match status" value="1"/>
</dbReference>
<dbReference type="FunFam" id="3.40.50.2300:FF:000001">
    <property type="entry name" value="DNA-binding response regulator PhoB"/>
    <property type="match status" value="1"/>
</dbReference>
<dbReference type="FunFam" id="1.10.10.10:FF:000005">
    <property type="entry name" value="Two-component system response regulator"/>
    <property type="match status" value="1"/>
</dbReference>
<dbReference type="Gene3D" id="3.40.50.2300">
    <property type="match status" value="1"/>
</dbReference>
<dbReference type="Gene3D" id="6.10.250.690">
    <property type="match status" value="1"/>
</dbReference>
<dbReference type="Gene3D" id="1.10.10.10">
    <property type="entry name" value="Winged helix-like DNA-binding domain superfamily/Winged helix DNA-binding domain"/>
    <property type="match status" value="1"/>
</dbReference>
<dbReference type="InterPro" id="IPR011006">
    <property type="entry name" value="CheY-like_superfamily"/>
</dbReference>
<dbReference type="InterPro" id="IPR006291">
    <property type="entry name" value="CusR-like"/>
</dbReference>
<dbReference type="InterPro" id="IPR001867">
    <property type="entry name" value="OmpR/PhoB-type_DNA-bd"/>
</dbReference>
<dbReference type="InterPro" id="IPR001789">
    <property type="entry name" value="Sig_transdc_resp-reg_receiver"/>
</dbReference>
<dbReference type="InterPro" id="IPR039420">
    <property type="entry name" value="WalR-like"/>
</dbReference>
<dbReference type="InterPro" id="IPR036388">
    <property type="entry name" value="WH-like_DNA-bd_sf"/>
</dbReference>
<dbReference type="NCBIfam" id="TIGR01387">
    <property type="entry name" value="cztR_silR_copR"/>
    <property type="match status" value="1"/>
</dbReference>
<dbReference type="PANTHER" id="PTHR48111">
    <property type="entry name" value="REGULATOR OF RPOS"/>
    <property type="match status" value="1"/>
</dbReference>
<dbReference type="PANTHER" id="PTHR48111:SF41">
    <property type="entry name" value="TRANSCRIPTIONAL REGULATORY PROTEIN CUSR-RELATED"/>
    <property type="match status" value="1"/>
</dbReference>
<dbReference type="Pfam" id="PF00072">
    <property type="entry name" value="Response_reg"/>
    <property type="match status" value="1"/>
</dbReference>
<dbReference type="Pfam" id="PF00486">
    <property type="entry name" value="Trans_reg_C"/>
    <property type="match status" value="1"/>
</dbReference>
<dbReference type="SMART" id="SM00448">
    <property type="entry name" value="REC"/>
    <property type="match status" value="1"/>
</dbReference>
<dbReference type="SMART" id="SM00862">
    <property type="entry name" value="Trans_reg_C"/>
    <property type="match status" value="1"/>
</dbReference>
<dbReference type="SUPFAM" id="SSF52172">
    <property type="entry name" value="CheY-like"/>
    <property type="match status" value="1"/>
</dbReference>
<dbReference type="PROSITE" id="PS51755">
    <property type="entry name" value="OMPR_PHOB"/>
    <property type="match status" value="1"/>
</dbReference>
<dbReference type="PROSITE" id="PS50110">
    <property type="entry name" value="RESPONSE_REGULATORY"/>
    <property type="match status" value="1"/>
</dbReference>
<reference key="1">
    <citation type="journal article" date="2004" name="Proc. Natl. Acad. Sci. U.S.A.">
        <title>Genomic plasticity of the causative agent of melioidosis, Burkholderia pseudomallei.</title>
        <authorList>
            <person name="Holden M.T.G."/>
            <person name="Titball R.W."/>
            <person name="Peacock S.J."/>
            <person name="Cerdeno-Tarraga A.-M."/>
            <person name="Atkins T."/>
            <person name="Crossman L.C."/>
            <person name="Pitt T."/>
            <person name="Churcher C."/>
            <person name="Mungall K.L."/>
            <person name="Bentley S.D."/>
            <person name="Sebaihia M."/>
            <person name="Thomson N.R."/>
            <person name="Bason N."/>
            <person name="Beacham I.R."/>
            <person name="Brooks K."/>
            <person name="Brown K.A."/>
            <person name="Brown N.F."/>
            <person name="Challis G.L."/>
            <person name="Cherevach I."/>
            <person name="Chillingworth T."/>
            <person name="Cronin A."/>
            <person name="Crossett B."/>
            <person name="Davis P."/>
            <person name="DeShazer D."/>
            <person name="Feltwell T."/>
            <person name="Fraser A."/>
            <person name="Hance Z."/>
            <person name="Hauser H."/>
            <person name="Holroyd S."/>
            <person name="Jagels K."/>
            <person name="Keith K.E."/>
            <person name="Maddison M."/>
            <person name="Moule S."/>
            <person name="Price C."/>
            <person name="Quail M.A."/>
            <person name="Rabbinowitsch E."/>
            <person name="Rutherford K."/>
            <person name="Sanders M."/>
            <person name="Simmonds M."/>
            <person name="Songsivilai S."/>
            <person name="Stevens K."/>
            <person name="Tumapa S."/>
            <person name="Vesaratchavest M."/>
            <person name="Whitehead S."/>
            <person name="Yeats C."/>
            <person name="Barrell B.G."/>
            <person name="Oyston P.C.F."/>
            <person name="Parkhill J."/>
        </authorList>
    </citation>
    <scope>NUCLEOTIDE SEQUENCE [LARGE SCALE GENOMIC DNA]</scope>
    <source>
        <strain>K96243</strain>
    </source>
</reference>
<accession>P0DMK7</accession>
<accession>O31395</accession>
<accession>Q63LH5</accession>
<evidence type="ECO:0000250" key="1"/>
<evidence type="ECO:0000255" key="2">
    <source>
        <dbReference type="PROSITE-ProRule" id="PRU00169"/>
    </source>
</evidence>
<evidence type="ECO:0000255" key="3">
    <source>
        <dbReference type="PROSITE-ProRule" id="PRU01091"/>
    </source>
</evidence>
<organism>
    <name type="scientific">Burkholderia pseudomallei (strain K96243)</name>
    <dbReference type="NCBI Taxonomy" id="272560"/>
    <lineage>
        <taxon>Bacteria</taxon>
        <taxon>Pseudomonadati</taxon>
        <taxon>Pseudomonadota</taxon>
        <taxon>Betaproteobacteria</taxon>
        <taxon>Burkholderiales</taxon>
        <taxon>Burkholderiaceae</taxon>
        <taxon>Burkholderia</taxon>
        <taxon>pseudomallei group</taxon>
    </lineage>
</organism>
<sequence length="229" mass="25985">MRILIVEDEPKTGMYLRKGLTEAGFIADWVEDGVTGLHQAETEEYDLIILDVMLPGHDGWTVLERLRRAHSTPVLFLTARDDVGDRVKGLELGADDYVVKPFDFVELVARVRSILRRGQARESTVLRIADLELDLTRRKATRQGDVVLLTAKEFALLWLLMRREGEILPRATIASQVWDMNFNSDTNVVDAAIRRLRSKIDDAYEPKLIHTVRGMGYVLEVRSASAPSR</sequence>
<protein>
    <recommendedName>
        <fullName>Transcriptional activator protein IrlR</fullName>
    </recommendedName>
</protein>
<comment type="function">
    <text evidence="1">Member of the two-component regulatory system IrlR/IrlS. May be involved in invasion of eukaryotic cells and heavy-metal resistance (By similarity).</text>
</comment>
<comment type="PTM">
    <text evidence="1">Phosphorylated by IrlS.</text>
</comment>
<gene>
    <name type="primary">irlR</name>
    <name type="ordered locus">BPSS1040</name>
</gene>
<feature type="chain" id="PRO_0000081112" description="Transcriptional activator protein IrlR">
    <location>
        <begin position="1"/>
        <end position="229"/>
    </location>
</feature>
<feature type="domain" description="Response regulatory" evidence="2">
    <location>
        <begin position="2"/>
        <end position="115"/>
    </location>
</feature>
<feature type="DNA-binding region" description="OmpR/PhoB-type" evidence="3">
    <location>
        <begin position="123"/>
        <end position="221"/>
    </location>
</feature>
<feature type="modified residue" description="4-aspartylphosphate" evidence="2">
    <location>
        <position position="51"/>
    </location>
</feature>
<keyword id="KW-0010">Activator</keyword>
<keyword id="KW-0104">Cadmium</keyword>
<keyword id="KW-0238">DNA-binding</keyword>
<keyword id="KW-0597">Phosphoprotein</keyword>
<keyword id="KW-1185">Reference proteome</keyword>
<keyword id="KW-0804">Transcription</keyword>
<keyword id="KW-0805">Transcription regulation</keyword>
<keyword id="KW-0902">Two-component regulatory system</keyword>
<keyword id="KW-0862">Zinc</keyword>
<proteinExistence type="inferred from homology"/>
<name>IRLR_BURPS</name>